<proteinExistence type="inferred from homology"/>
<comment type="function">
    <text evidence="1">This is one of the proteins that bind and probably mediate the attachment of the 5S RNA into the large ribosomal subunit, where it forms part of the central protuberance. In the 70S ribosome it contacts protein S13 of the 30S subunit (bridge B1b), connecting the 2 subunits; this bridge is implicated in subunit movement. Contacts the P site tRNA; the 5S rRNA and some of its associated proteins might help stabilize positioning of ribosome-bound tRNAs.</text>
</comment>
<comment type="subunit">
    <text evidence="1">Part of the 50S ribosomal subunit; part of the 5S rRNA/L5/L18/L25 subcomplex. Contacts the 5S rRNA and the P site tRNA. Forms a bridge to the 30S subunit in the 70S ribosome.</text>
</comment>
<comment type="similarity">
    <text evidence="1">Belongs to the universal ribosomal protein uL5 family.</text>
</comment>
<evidence type="ECO:0000255" key="1">
    <source>
        <dbReference type="HAMAP-Rule" id="MF_01333"/>
    </source>
</evidence>
<evidence type="ECO:0000305" key="2"/>
<dbReference type="EMBL" id="CP001129">
    <property type="protein sequence ID" value="ACG61451.1"/>
    <property type="molecule type" value="Genomic_DNA"/>
</dbReference>
<dbReference type="RefSeq" id="WP_003046060.1">
    <property type="nucleotide sequence ID" value="NC_011134.1"/>
</dbReference>
<dbReference type="SMR" id="B4U512"/>
<dbReference type="GeneID" id="83703916"/>
<dbReference type="KEGG" id="sez:Sez_0068"/>
<dbReference type="HOGENOM" id="CLU_061015_2_1_9"/>
<dbReference type="Proteomes" id="UP000001873">
    <property type="component" value="Chromosome"/>
</dbReference>
<dbReference type="GO" id="GO:1990904">
    <property type="term" value="C:ribonucleoprotein complex"/>
    <property type="evidence" value="ECO:0007669"/>
    <property type="project" value="UniProtKB-KW"/>
</dbReference>
<dbReference type="GO" id="GO:0005840">
    <property type="term" value="C:ribosome"/>
    <property type="evidence" value="ECO:0007669"/>
    <property type="project" value="UniProtKB-KW"/>
</dbReference>
<dbReference type="GO" id="GO:0019843">
    <property type="term" value="F:rRNA binding"/>
    <property type="evidence" value="ECO:0007669"/>
    <property type="project" value="UniProtKB-UniRule"/>
</dbReference>
<dbReference type="GO" id="GO:0003735">
    <property type="term" value="F:structural constituent of ribosome"/>
    <property type="evidence" value="ECO:0007669"/>
    <property type="project" value="InterPro"/>
</dbReference>
<dbReference type="GO" id="GO:0000049">
    <property type="term" value="F:tRNA binding"/>
    <property type="evidence" value="ECO:0007669"/>
    <property type="project" value="UniProtKB-UniRule"/>
</dbReference>
<dbReference type="GO" id="GO:0006412">
    <property type="term" value="P:translation"/>
    <property type="evidence" value="ECO:0007669"/>
    <property type="project" value="UniProtKB-UniRule"/>
</dbReference>
<dbReference type="FunFam" id="3.30.1440.10:FF:000001">
    <property type="entry name" value="50S ribosomal protein L5"/>
    <property type="match status" value="1"/>
</dbReference>
<dbReference type="Gene3D" id="3.30.1440.10">
    <property type="match status" value="1"/>
</dbReference>
<dbReference type="HAMAP" id="MF_01333_B">
    <property type="entry name" value="Ribosomal_uL5_B"/>
    <property type="match status" value="1"/>
</dbReference>
<dbReference type="InterPro" id="IPR002132">
    <property type="entry name" value="Ribosomal_uL5"/>
</dbReference>
<dbReference type="InterPro" id="IPR020930">
    <property type="entry name" value="Ribosomal_uL5_bac-type"/>
</dbReference>
<dbReference type="InterPro" id="IPR031309">
    <property type="entry name" value="Ribosomal_uL5_C"/>
</dbReference>
<dbReference type="InterPro" id="IPR020929">
    <property type="entry name" value="Ribosomal_uL5_CS"/>
</dbReference>
<dbReference type="InterPro" id="IPR022803">
    <property type="entry name" value="Ribosomal_uL5_dom_sf"/>
</dbReference>
<dbReference type="InterPro" id="IPR031310">
    <property type="entry name" value="Ribosomal_uL5_N"/>
</dbReference>
<dbReference type="NCBIfam" id="NF000585">
    <property type="entry name" value="PRK00010.1"/>
    <property type="match status" value="1"/>
</dbReference>
<dbReference type="PANTHER" id="PTHR11994">
    <property type="entry name" value="60S RIBOSOMAL PROTEIN L11-RELATED"/>
    <property type="match status" value="1"/>
</dbReference>
<dbReference type="Pfam" id="PF00281">
    <property type="entry name" value="Ribosomal_L5"/>
    <property type="match status" value="1"/>
</dbReference>
<dbReference type="Pfam" id="PF00673">
    <property type="entry name" value="Ribosomal_L5_C"/>
    <property type="match status" value="1"/>
</dbReference>
<dbReference type="PIRSF" id="PIRSF002161">
    <property type="entry name" value="Ribosomal_L5"/>
    <property type="match status" value="1"/>
</dbReference>
<dbReference type="SUPFAM" id="SSF55282">
    <property type="entry name" value="RL5-like"/>
    <property type="match status" value="1"/>
</dbReference>
<dbReference type="PROSITE" id="PS00358">
    <property type="entry name" value="RIBOSOMAL_L5"/>
    <property type="match status" value="1"/>
</dbReference>
<gene>
    <name evidence="1" type="primary">rplE</name>
    <name type="ordered locus">Sez_0068</name>
</gene>
<keyword id="KW-0687">Ribonucleoprotein</keyword>
<keyword id="KW-0689">Ribosomal protein</keyword>
<keyword id="KW-0694">RNA-binding</keyword>
<keyword id="KW-0699">rRNA-binding</keyword>
<keyword id="KW-0820">tRNA-binding</keyword>
<sequence length="180" mass="19842">MANRLKEKYTNEVIPALTEKFNYTSVMAVPKVEKIVLNMGVGDAVSNAKNLEKAAAELALISGQKPLITKAKKSIAGFRLREGVAIGAKVTLRGERMYEFLDKLVSVSLPRVRDFHGVPTKSFDGRGNYTLGVKEQLIFPEINFDDVDKVRGLDIVIVTTANTDEESRELLKGLGMPFAK</sequence>
<protein>
    <recommendedName>
        <fullName evidence="1">Large ribosomal subunit protein uL5</fullName>
    </recommendedName>
    <alternativeName>
        <fullName evidence="2">50S ribosomal protein L5</fullName>
    </alternativeName>
</protein>
<organism>
    <name type="scientific">Streptococcus equi subsp. zooepidemicus (strain MGCS10565)</name>
    <dbReference type="NCBI Taxonomy" id="552526"/>
    <lineage>
        <taxon>Bacteria</taxon>
        <taxon>Bacillati</taxon>
        <taxon>Bacillota</taxon>
        <taxon>Bacilli</taxon>
        <taxon>Lactobacillales</taxon>
        <taxon>Streptococcaceae</taxon>
        <taxon>Streptococcus</taxon>
    </lineage>
</organism>
<feature type="chain" id="PRO_1000142453" description="Large ribosomal subunit protein uL5">
    <location>
        <begin position="1"/>
        <end position="180"/>
    </location>
</feature>
<accession>B4U512</accession>
<reference key="1">
    <citation type="journal article" date="2008" name="PLoS ONE">
        <title>Genome sequence of a lancefield group C Streptococcus zooepidemicus strain causing epidemic nephritis: new information about an old disease.</title>
        <authorList>
            <person name="Beres S.B."/>
            <person name="Sesso R."/>
            <person name="Pinto S.W.L."/>
            <person name="Hoe N.P."/>
            <person name="Porcella S.F."/>
            <person name="Deleo F.R."/>
            <person name="Musser J.M."/>
        </authorList>
    </citation>
    <scope>NUCLEOTIDE SEQUENCE [LARGE SCALE GENOMIC DNA]</scope>
    <source>
        <strain>MGCS10565</strain>
    </source>
</reference>
<name>RL5_STREM</name>